<organism>
    <name type="scientific">Arabidopsis thaliana</name>
    <name type="common">Mouse-ear cress</name>
    <dbReference type="NCBI Taxonomy" id="3702"/>
    <lineage>
        <taxon>Eukaryota</taxon>
        <taxon>Viridiplantae</taxon>
        <taxon>Streptophyta</taxon>
        <taxon>Embryophyta</taxon>
        <taxon>Tracheophyta</taxon>
        <taxon>Spermatophyta</taxon>
        <taxon>Magnoliopsida</taxon>
        <taxon>eudicotyledons</taxon>
        <taxon>Gunneridae</taxon>
        <taxon>Pentapetalae</taxon>
        <taxon>rosids</taxon>
        <taxon>malvids</taxon>
        <taxon>Brassicales</taxon>
        <taxon>Brassicaceae</taxon>
        <taxon>Camelineae</taxon>
        <taxon>Arabidopsis</taxon>
    </lineage>
</organism>
<name>HFA1B_ARATH</name>
<reference key="1">
    <citation type="journal article" date="1998" name="Mol. Gen. Genet.">
        <title>HSF3, a new heat shock factor from Arabidopsis thaliana, derepresses the heat shock response and confers thermotolerance when overexpressed in transgenic plants.</title>
        <authorList>
            <person name="Praendl R."/>
            <person name="Hinderhofer K."/>
            <person name="Eggers-Schumacher G."/>
            <person name="Schoeffl F."/>
        </authorList>
    </citation>
    <scope>NUCLEOTIDE SEQUENCE [MRNA]</scope>
    <source>
        <strain>cv. Columbia</strain>
        <tissue>Green siliques</tissue>
    </source>
</reference>
<reference key="2">
    <citation type="journal article" date="2000" name="Nature">
        <title>Sequence and analysis of chromosome 5 of the plant Arabidopsis thaliana.</title>
        <authorList>
            <person name="Tabata S."/>
            <person name="Kaneko T."/>
            <person name="Nakamura Y."/>
            <person name="Kotani H."/>
            <person name="Kato T."/>
            <person name="Asamizu E."/>
            <person name="Miyajima N."/>
            <person name="Sasamoto S."/>
            <person name="Kimura T."/>
            <person name="Hosouchi T."/>
            <person name="Kawashima K."/>
            <person name="Kohara M."/>
            <person name="Matsumoto M."/>
            <person name="Matsuno A."/>
            <person name="Muraki A."/>
            <person name="Nakayama S."/>
            <person name="Nakazaki N."/>
            <person name="Naruo K."/>
            <person name="Okumura S."/>
            <person name="Shinpo S."/>
            <person name="Takeuchi C."/>
            <person name="Wada T."/>
            <person name="Watanabe A."/>
            <person name="Yamada M."/>
            <person name="Yasuda M."/>
            <person name="Sato S."/>
            <person name="de la Bastide M."/>
            <person name="Huang E."/>
            <person name="Spiegel L."/>
            <person name="Gnoj L."/>
            <person name="O'Shaughnessy A."/>
            <person name="Preston R."/>
            <person name="Habermann K."/>
            <person name="Murray J."/>
            <person name="Johnson D."/>
            <person name="Rohlfing T."/>
            <person name="Nelson J."/>
            <person name="Stoneking T."/>
            <person name="Pepin K."/>
            <person name="Spieth J."/>
            <person name="Sekhon M."/>
            <person name="Armstrong J."/>
            <person name="Becker M."/>
            <person name="Belter E."/>
            <person name="Cordum H."/>
            <person name="Cordes M."/>
            <person name="Courtney L."/>
            <person name="Courtney W."/>
            <person name="Dante M."/>
            <person name="Du H."/>
            <person name="Edwards J."/>
            <person name="Fryman J."/>
            <person name="Haakensen B."/>
            <person name="Lamar E."/>
            <person name="Latreille P."/>
            <person name="Leonard S."/>
            <person name="Meyer R."/>
            <person name="Mulvaney E."/>
            <person name="Ozersky P."/>
            <person name="Riley A."/>
            <person name="Strowmatt C."/>
            <person name="Wagner-McPherson C."/>
            <person name="Wollam A."/>
            <person name="Yoakum M."/>
            <person name="Bell M."/>
            <person name="Dedhia N."/>
            <person name="Parnell L."/>
            <person name="Shah R."/>
            <person name="Rodriguez M."/>
            <person name="Hoon See L."/>
            <person name="Vil D."/>
            <person name="Baker J."/>
            <person name="Kirchoff K."/>
            <person name="Toth K."/>
            <person name="King L."/>
            <person name="Bahret A."/>
            <person name="Miller B."/>
            <person name="Marra M.A."/>
            <person name="Martienssen R."/>
            <person name="McCombie W.R."/>
            <person name="Wilson R.K."/>
            <person name="Murphy G."/>
            <person name="Bancroft I."/>
            <person name="Volckaert G."/>
            <person name="Wambutt R."/>
            <person name="Duesterhoeft A."/>
            <person name="Stiekema W."/>
            <person name="Pohl T."/>
            <person name="Entian K.-D."/>
            <person name="Terryn N."/>
            <person name="Hartley N."/>
            <person name="Bent E."/>
            <person name="Johnson S."/>
            <person name="Langham S.-A."/>
            <person name="McCullagh B."/>
            <person name="Robben J."/>
            <person name="Grymonprez B."/>
            <person name="Zimmermann W."/>
            <person name="Ramsperger U."/>
            <person name="Wedler H."/>
            <person name="Balke K."/>
            <person name="Wedler E."/>
            <person name="Peters S."/>
            <person name="van Staveren M."/>
            <person name="Dirkse W."/>
            <person name="Mooijman P."/>
            <person name="Klein Lankhorst R."/>
            <person name="Weitzenegger T."/>
            <person name="Bothe G."/>
            <person name="Rose M."/>
            <person name="Hauf J."/>
            <person name="Berneiser S."/>
            <person name="Hempel S."/>
            <person name="Feldpausch M."/>
            <person name="Lamberth S."/>
            <person name="Villarroel R."/>
            <person name="Gielen J."/>
            <person name="Ardiles W."/>
            <person name="Bents O."/>
            <person name="Lemcke K."/>
            <person name="Kolesov G."/>
            <person name="Mayer K.F.X."/>
            <person name="Rudd S."/>
            <person name="Schoof H."/>
            <person name="Schueller C."/>
            <person name="Zaccaria P."/>
            <person name="Mewes H.-W."/>
            <person name="Bevan M."/>
            <person name="Fransz P.F."/>
        </authorList>
    </citation>
    <scope>NUCLEOTIDE SEQUENCE [LARGE SCALE GENOMIC DNA]</scope>
    <source>
        <strain>cv. Columbia</strain>
    </source>
</reference>
<reference key="3">
    <citation type="journal article" date="2017" name="Plant J.">
        <title>Araport11: a complete reannotation of the Arabidopsis thaliana reference genome.</title>
        <authorList>
            <person name="Cheng C.Y."/>
            <person name="Krishnakumar V."/>
            <person name="Chan A.P."/>
            <person name="Thibaud-Nissen F."/>
            <person name="Schobel S."/>
            <person name="Town C.D."/>
        </authorList>
    </citation>
    <scope>GENOME REANNOTATION</scope>
    <source>
        <strain>cv. Columbia</strain>
    </source>
</reference>
<reference key="4">
    <citation type="journal article" date="2001" name="Cell Stress Chaperones">
        <title>Arabidopsis and the heat stress transcription factor world: how many heat stress transcription factors do we need?</title>
        <authorList>
            <person name="Nover L."/>
            <person name="Bharti K."/>
            <person name="Doering P."/>
            <person name="Mishra S.K."/>
            <person name="Ganguli A."/>
            <person name="Scharf K.-D."/>
        </authorList>
    </citation>
    <scope>GENE FAMILY</scope>
    <scope>NOMENCLATURE</scope>
    <scope>DOMAIN AHA</scope>
</reference>
<reference key="5">
    <citation type="journal article" date="2008" name="J. Genet. Genomics">
        <title>Genome-wide analysis of heat shock transcription factor families in rice and Arabidopsis.</title>
        <authorList>
            <person name="Guo J."/>
            <person name="Wu J."/>
            <person name="Ji Q."/>
            <person name="Wang C."/>
            <person name="Luo L."/>
            <person name="Yuan Y."/>
            <person name="Wang Y."/>
            <person name="Wang J."/>
        </authorList>
    </citation>
    <scope>GENE FAMILY</scope>
    <scope>NOMENCLATURE</scope>
</reference>
<reference key="6">
    <citation type="journal article" date="2010" name="Plant Physiol.">
        <title>Cytosol-localized heat shock factor-binding protein, AtHSBP, functions as a negative regulator of heat shock response by translocation to the nucleus and is required for seed development in Arabidopsis.</title>
        <authorList>
            <person name="Hsu S.-F."/>
            <person name="Lai H.-C."/>
            <person name="Jinn T.-L."/>
        </authorList>
    </citation>
    <scope>INTERACTION WITH HSBP</scope>
    <scope>REPRESSION BY HSBP</scope>
</reference>
<reference key="7">
    <citation type="journal article" date="2010" name="Plant Signal. Behav.">
        <title>AtHSBP functions in seed development and the motif is required for subcellular localization and interaction with AtHSFs.</title>
        <authorList>
            <person name="Hsu S.-F."/>
            <person name="Jinn T.-L."/>
        </authorList>
    </citation>
    <scope>INTERACTION WITH HSBP</scope>
    <source>
        <strain>cv. Columbia</strain>
    </source>
</reference>
<proteinExistence type="evidence at protein level"/>
<evidence type="ECO:0000250" key="1"/>
<evidence type="ECO:0000250" key="2">
    <source>
        <dbReference type="UniProtKB" id="P41151"/>
    </source>
</evidence>
<evidence type="ECO:0000255" key="3"/>
<evidence type="ECO:0000256" key="4">
    <source>
        <dbReference type="SAM" id="MobiDB-lite"/>
    </source>
</evidence>
<evidence type="ECO:0000269" key="5">
    <source>
    </source>
</evidence>
<evidence type="ECO:0000269" key="6">
    <source>
    </source>
</evidence>
<evidence type="ECO:0000269" key="7">
    <source>
    </source>
</evidence>
<evidence type="ECO:0000305" key="8"/>
<keyword id="KW-0010">Activator</keyword>
<keyword id="KW-0963">Cytoplasm</keyword>
<keyword id="KW-0238">DNA-binding</keyword>
<keyword id="KW-0539">Nucleus</keyword>
<keyword id="KW-0597">Phosphoprotein</keyword>
<keyword id="KW-1185">Reference proteome</keyword>
<keyword id="KW-0346">Stress response</keyword>
<keyword id="KW-0804">Transcription</keyword>
<keyword id="KW-0805">Transcription regulation</keyword>
<feature type="chain" id="PRO_0000124584" description="Heat stress transcription factor A-1b">
    <location>
        <begin position="1"/>
        <end position="481"/>
    </location>
</feature>
<feature type="DNA-binding region" evidence="1">
    <location>
        <begin position="25"/>
        <end position="119"/>
    </location>
</feature>
<feature type="region of interest" description="Disordered" evidence="4">
    <location>
        <begin position="1"/>
        <end position="23"/>
    </location>
</feature>
<feature type="region of interest" description="Hydrophobic repeat HR-A/B">
    <location>
        <begin position="138"/>
        <end position="204"/>
    </location>
</feature>
<feature type="region of interest" description="Disordered" evidence="4">
    <location>
        <begin position="213"/>
        <end position="244"/>
    </location>
</feature>
<feature type="short sequence motif" description="Nuclear localization signal" evidence="3">
    <location>
        <begin position="229"/>
        <end position="233"/>
    </location>
</feature>
<feature type="short sequence motif" description="AHA">
    <location>
        <begin position="418"/>
        <end position="427"/>
    </location>
</feature>
<feature type="short sequence motif" description="Nuclear export signal" evidence="3">
    <location>
        <begin position="467"/>
        <end position="474"/>
    </location>
</feature>
<feature type="compositionally biased region" description="Low complexity" evidence="4">
    <location>
        <begin position="1"/>
        <end position="16"/>
    </location>
</feature>
<feature type="compositionally biased region" description="Polar residues" evidence="4">
    <location>
        <begin position="213"/>
        <end position="227"/>
    </location>
</feature>
<feature type="compositionally biased region" description="Basic and acidic residues" evidence="4">
    <location>
        <begin position="234"/>
        <end position="243"/>
    </location>
</feature>
<comment type="function">
    <text>Transcriptional activator that specifically binds DNA sequence 5'-AGAAnnTTCT-3' known as heat shock promoter elements (HSE).</text>
</comment>
<comment type="subunit">
    <text evidence="2 6 7">Homotrimer (By similarity). Binds to HSBP (PubMed:20388662, PubMed:20657173).</text>
</comment>
<comment type="subcellular location">
    <subcellularLocation>
        <location evidence="8">Cytoplasm</location>
    </subcellularLocation>
    <subcellularLocation>
        <location evidence="8">Nucleus</location>
    </subcellularLocation>
</comment>
<comment type="induction">
    <text evidence="6">DNA-binding capacity is reduced by HSBP in vitro.</text>
</comment>
<comment type="domain">
    <text evidence="5">The hydrophobic-rich region (HR-A/B) corresponds to the oligomerization domain. AHA motif is a transcriptional activator element.</text>
</comment>
<comment type="PTM">
    <text evidence="1">Exhibits temperature-dependent phosphorylation.</text>
</comment>
<comment type="similarity">
    <text evidence="8">Belongs to the HSF family. Class A subfamily.</text>
</comment>
<comment type="sequence caution" evidence="8">
    <conflict type="erroneous initiation">
        <sequence resource="EMBL-CDS" id="CAC01846"/>
    </conflict>
    <text>Truncated N-terminus.</text>
</comment>
<dbReference type="EMBL" id="Y14068">
    <property type="protein sequence ID" value="CAA74397.1"/>
    <property type="molecule type" value="mRNA"/>
</dbReference>
<dbReference type="EMBL" id="AL391147">
    <property type="protein sequence ID" value="CAC01846.1"/>
    <property type="status" value="ALT_INIT"/>
    <property type="molecule type" value="Genomic_DNA"/>
</dbReference>
<dbReference type="EMBL" id="CP002688">
    <property type="protein sequence ID" value="AED92343.1"/>
    <property type="molecule type" value="Genomic_DNA"/>
</dbReference>
<dbReference type="EMBL" id="CP002688">
    <property type="protein sequence ID" value="AED92344.1"/>
    <property type="molecule type" value="Genomic_DNA"/>
</dbReference>
<dbReference type="PIR" id="T51514">
    <property type="entry name" value="T51514"/>
</dbReference>
<dbReference type="PIR" id="T51945">
    <property type="entry name" value="T51945"/>
</dbReference>
<dbReference type="RefSeq" id="NP_197184.2">
    <property type="nucleotide sequence ID" value="NM_121688.4"/>
</dbReference>
<dbReference type="RefSeq" id="NP_850832.1">
    <property type="nucleotide sequence ID" value="NM_180501.3"/>
</dbReference>
<dbReference type="SMR" id="O81821"/>
<dbReference type="BioGRID" id="16821">
    <property type="interactions" value="5"/>
</dbReference>
<dbReference type="FunCoup" id="O81821">
    <property type="interactions" value="1014"/>
</dbReference>
<dbReference type="IntAct" id="O81821">
    <property type="interactions" value="1"/>
</dbReference>
<dbReference type="STRING" id="3702.O81821"/>
<dbReference type="iPTMnet" id="O81821"/>
<dbReference type="PaxDb" id="3702-AT5G16820.2"/>
<dbReference type="ProteomicsDB" id="230131"/>
<dbReference type="EnsemblPlants" id="AT5G16820.1">
    <property type="protein sequence ID" value="AT5G16820.1"/>
    <property type="gene ID" value="AT5G16820"/>
</dbReference>
<dbReference type="EnsemblPlants" id="AT5G16820.2">
    <property type="protein sequence ID" value="AT5G16820.2"/>
    <property type="gene ID" value="AT5G16820"/>
</dbReference>
<dbReference type="GeneID" id="831545"/>
<dbReference type="Gramene" id="AT5G16820.1">
    <property type="protein sequence ID" value="AT5G16820.1"/>
    <property type="gene ID" value="AT5G16820"/>
</dbReference>
<dbReference type="Gramene" id="AT5G16820.2">
    <property type="protein sequence ID" value="AT5G16820.2"/>
    <property type="gene ID" value="AT5G16820"/>
</dbReference>
<dbReference type="KEGG" id="ath:AT5G16820"/>
<dbReference type="Araport" id="AT5G16820"/>
<dbReference type="TAIR" id="AT5G16820">
    <property type="gene designation" value="HSF3"/>
</dbReference>
<dbReference type="eggNOG" id="KOG0627">
    <property type="taxonomic scope" value="Eukaryota"/>
</dbReference>
<dbReference type="HOGENOM" id="CLU_030308_0_0_1"/>
<dbReference type="InParanoid" id="O81821"/>
<dbReference type="OMA" id="CETGNGE"/>
<dbReference type="PhylomeDB" id="O81821"/>
<dbReference type="CD-CODE" id="4299E36E">
    <property type="entry name" value="Nucleolus"/>
</dbReference>
<dbReference type="PRO" id="PR:O81821"/>
<dbReference type="Proteomes" id="UP000006548">
    <property type="component" value="Chromosome 5"/>
</dbReference>
<dbReference type="ExpressionAtlas" id="O81821">
    <property type="expression patterns" value="baseline and differential"/>
</dbReference>
<dbReference type="GO" id="GO:0005737">
    <property type="term" value="C:cytoplasm"/>
    <property type="evidence" value="ECO:0007669"/>
    <property type="project" value="UniProtKB-SubCell"/>
</dbReference>
<dbReference type="GO" id="GO:0005634">
    <property type="term" value="C:nucleus"/>
    <property type="evidence" value="ECO:0000314"/>
    <property type="project" value="TAIR"/>
</dbReference>
<dbReference type="GO" id="GO:0003677">
    <property type="term" value="F:DNA binding"/>
    <property type="evidence" value="ECO:0000314"/>
    <property type="project" value="TAIR"/>
</dbReference>
<dbReference type="GO" id="GO:0003700">
    <property type="term" value="F:DNA-binding transcription factor activity"/>
    <property type="evidence" value="ECO:0000315"/>
    <property type="project" value="TAIR"/>
</dbReference>
<dbReference type="GO" id="GO:0043565">
    <property type="term" value="F:sequence-specific DNA binding"/>
    <property type="evidence" value="ECO:0007669"/>
    <property type="project" value="InterPro"/>
</dbReference>
<dbReference type="GO" id="GO:0009408">
    <property type="term" value="P:response to heat"/>
    <property type="evidence" value="ECO:0000315"/>
    <property type="project" value="TAIR"/>
</dbReference>
<dbReference type="FunFam" id="1.10.10.10:FF:000057">
    <property type="entry name" value="Heat shock transcription factor 1"/>
    <property type="match status" value="1"/>
</dbReference>
<dbReference type="Gene3D" id="1.10.10.10">
    <property type="entry name" value="Winged helix-like DNA-binding domain superfamily/Winged helix DNA-binding domain"/>
    <property type="match status" value="1"/>
</dbReference>
<dbReference type="InterPro" id="IPR000232">
    <property type="entry name" value="HSF_DNA-bd"/>
</dbReference>
<dbReference type="InterPro" id="IPR036388">
    <property type="entry name" value="WH-like_DNA-bd_sf"/>
</dbReference>
<dbReference type="InterPro" id="IPR036390">
    <property type="entry name" value="WH_DNA-bd_sf"/>
</dbReference>
<dbReference type="PANTHER" id="PTHR10015">
    <property type="entry name" value="HEAT SHOCK TRANSCRIPTION FACTOR"/>
    <property type="match status" value="1"/>
</dbReference>
<dbReference type="PANTHER" id="PTHR10015:SF458">
    <property type="entry name" value="HEAT STRESS TRANSCRIPTION FACTOR A-1B"/>
    <property type="match status" value="1"/>
</dbReference>
<dbReference type="Pfam" id="PF00447">
    <property type="entry name" value="HSF_DNA-bind"/>
    <property type="match status" value="1"/>
</dbReference>
<dbReference type="PRINTS" id="PR00056">
    <property type="entry name" value="HSFDOMAIN"/>
</dbReference>
<dbReference type="SMART" id="SM00415">
    <property type="entry name" value="HSF"/>
    <property type="match status" value="1"/>
</dbReference>
<dbReference type="SUPFAM" id="SSF46785">
    <property type="entry name" value="Winged helix' DNA-binding domain"/>
    <property type="match status" value="1"/>
</dbReference>
<dbReference type="PROSITE" id="PS00434">
    <property type="entry name" value="HSF_DOMAIN"/>
    <property type="match status" value="1"/>
</dbReference>
<gene>
    <name type="primary">HSFA1B</name>
    <name type="synonym">HSF18</name>
    <name type="synonym">HSF3</name>
    <name type="ordered locus">At5g16820</name>
    <name type="ORF">F5E19.160</name>
</gene>
<sequence length="481" mass="53576">MESVPESVPSPNSNTPSIPPPVNSVPPFLSKTYDMVDDPLTNEVVSWSSGNNSFVVWSAPEFSKVLLPKYFKHNNFSSFVRQLNTYGFRKVDPDRWEFANEGFLRGRKQLLKSIVRRKPSHVQQNQQQTQVQSSSVGACVEVGKFGIEEEVERLKRDKNVLMQELVRLRQQQQATENQLQNVGQKVQVMEQRQQQMMSFLAKAVQSPGFLNQLVQQNNNDGNRQIPGSNKKRRLPVDEQENRGDNVANGLNRQIVRYQPSINEAAQNMLRQFLNTSTSPRYESVSNNPDSFLLGDVPSSTSVDNGNPSSRVSGVTLAEFSPNTVQSATNQVPEASLAHHPQAGLVQPNIGQSPAQGAAPADSWSPEFDLVGCETDSGECFDPIMAVLDESEGDAISPEGEGKMNELLEGVPKLPGIQDPFWEQFFSVELPAIADTDDILSGSVENNDLVLEQEPNEWTRNEQQMKYLTEQMGLLSSEAQRK</sequence>
<accession>O81821</accession>
<accession>Q9LFD6</accession>
<protein>
    <recommendedName>
        <fullName>Heat stress transcription factor A-1b</fullName>
        <shortName>AtHsfA1b</shortName>
    </recommendedName>
    <alternativeName>
        <fullName>AtHsf-18</fullName>
    </alternativeName>
    <alternativeName>
        <fullName>Heat shock factor protein 3</fullName>
        <shortName>HSF 3</shortName>
    </alternativeName>
    <alternativeName>
        <fullName>Heat shock transcription factor 3</fullName>
        <shortName>HSTF 3</shortName>
    </alternativeName>
</protein>